<feature type="chain" id="PRO_0000157201" description="Putative septation protein SpoVG 2">
    <location>
        <begin position="1"/>
        <end position="102"/>
    </location>
</feature>
<name>SP5G2_LISMF</name>
<dbReference type="EMBL" id="AE017262">
    <property type="protein sequence ID" value="AAT02995.1"/>
    <property type="molecule type" value="Genomic_DNA"/>
</dbReference>
<dbReference type="SMR" id="Q724L6"/>
<dbReference type="KEGG" id="lmf:LMOf2365_0208"/>
<dbReference type="HOGENOM" id="CLU_103669_2_1_9"/>
<dbReference type="GO" id="GO:0000917">
    <property type="term" value="P:division septum assembly"/>
    <property type="evidence" value="ECO:0007669"/>
    <property type="project" value="UniProtKB-KW"/>
</dbReference>
<dbReference type="GO" id="GO:0030435">
    <property type="term" value="P:sporulation resulting in formation of a cellular spore"/>
    <property type="evidence" value="ECO:0007669"/>
    <property type="project" value="InterPro"/>
</dbReference>
<dbReference type="FunFam" id="3.30.1120.40:FF:000001">
    <property type="entry name" value="Putative septation protein SpoVG"/>
    <property type="match status" value="1"/>
</dbReference>
<dbReference type="Gene3D" id="3.30.1120.40">
    <property type="entry name" value="Stage V sporulation protein G"/>
    <property type="match status" value="1"/>
</dbReference>
<dbReference type="HAMAP" id="MF_00819">
    <property type="entry name" value="SpoVG"/>
    <property type="match status" value="1"/>
</dbReference>
<dbReference type="InterPro" id="IPR007170">
    <property type="entry name" value="SpoVG"/>
</dbReference>
<dbReference type="InterPro" id="IPR036751">
    <property type="entry name" value="SpoVG_sf"/>
</dbReference>
<dbReference type="NCBIfam" id="NF009749">
    <property type="entry name" value="PRK13259.1"/>
    <property type="match status" value="1"/>
</dbReference>
<dbReference type="PANTHER" id="PTHR38429">
    <property type="entry name" value="SEPTATION PROTEIN SPOVG-RELATED"/>
    <property type="match status" value="1"/>
</dbReference>
<dbReference type="PANTHER" id="PTHR38429:SF1">
    <property type="entry name" value="SEPTATION PROTEIN SPOVG-RELATED"/>
    <property type="match status" value="1"/>
</dbReference>
<dbReference type="Pfam" id="PF04026">
    <property type="entry name" value="SpoVG"/>
    <property type="match status" value="1"/>
</dbReference>
<dbReference type="SUPFAM" id="SSF160537">
    <property type="entry name" value="SpoVG-like"/>
    <property type="match status" value="1"/>
</dbReference>
<gene>
    <name evidence="1" type="primary">spoVG2</name>
    <name type="synonym">spoVG-2</name>
    <name type="ordered locus">LMOf2365_0208</name>
</gene>
<keyword id="KW-0131">Cell cycle</keyword>
<keyword id="KW-0132">Cell division</keyword>
<keyword id="KW-0717">Septation</keyword>
<sequence>MQVTDVRLRRVETDGRMRAIASITLDEEFVVHDIRVIDGNNGLFVAMPSKRGVDGEFRDIAHPINSDTRAKIQEVVLAEYERVGEEEATAVTEEESESVSAE</sequence>
<protein>
    <recommendedName>
        <fullName evidence="1">Putative septation protein SpoVG 2</fullName>
    </recommendedName>
</protein>
<reference key="1">
    <citation type="journal article" date="2004" name="Nucleic Acids Res.">
        <title>Whole genome comparisons of serotype 4b and 1/2a strains of the food-borne pathogen Listeria monocytogenes reveal new insights into the core genome components of this species.</title>
        <authorList>
            <person name="Nelson K.E."/>
            <person name="Fouts D.E."/>
            <person name="Mongodin E.F."/>
            <person name="Ravel J."/>
            <person name="DeBoy R.T."/>
            <person name="Kolonay J.F."/>
            <person name="Rasko D.A."/>
            <person name="Angiuoli S.V."/>
            <person name="Gill S.R."/>
            <person name="Paulsen I.T."/>
            <person name="Peterson J.D."/>
            <person name="White O."/>
            <person name="Nelson W.C."/>
            <person name="Nierman W.C."/>
            <person name="Beanan M.J."/>
            <person name="Brinkac L.M."/>
            <person name="Daugherty S.C."/>
            <person name="Dodson R.J."/>
            <person name="Durkin A.S."/>
            <person name="Madupu R."/>
            <person name="Haft D.H."/>
            <person name="Selengut J."/>
            <person name="Van Aken S.E."/>
            <person name="Khouri H.M."/>
            <person name="Fedorova N."/>
            <person name="Forberger H.A."/>
            <person name="Tran B."/>
            <person name="Kathariou S."/>
            <person name="Wonderling L.D."/>
            <person name="Uhlich G.A."/>
            <person name="Bayles D.O."/>
            <person name="Luchansky J.B."/>
            <person name="Fraser C.M."/>
        </authorList>
    </citation>
    <scope>NUCLEOTIDE SEQUENCE [LARGE SCALE GENOMIC DNA]</scope>
    <source>
        <strain>F2365</strain>
    </source>
</reference>
<evidence type="ECO:0000255" key="1">
    <source>
        <dbReference type="HAMAP-Rule" id="MF_00819"/>
    </source>
</evidence>
<accession>Q724L6</accession>
<comment type="function">
    <text evidence="1">Could be involved in septation.</text>
</comment>
<comment type="similarity">
    <text evidence="1">Belongs to the SpoVG family.</text>
</comment>
<proteinExistence type="inferred from homology"/>
<organism>
    <name type="scientific">Listeria monocytogenes serotype 4b (strain F2365)</name>
    <dbReference type="NCBI Taxonomy" id="265669"/>
    <lineage>
        <taxon>Bacteria</taxon>
        <taxon>Bacillati</taxon>
        <taxon>Bacillota</taxon>
        <taxon>Bacilli</taxon>
        <taxon>Bacillales</taxon>
        <taxon>Listeriaceae</taxon>
        <taxon>Listeria</taxon>
    </lineage>
</organism>